<dbReference type="EC" id="3.1.-.-" evidence="1"/>
<dbReference type="EMBL" id="AE016879">
    <property type="protein sequence ID" value="AAP28236.1"/>
    <property type="molecule type" value="Genomic_DNA"/>
</dbReference>
<dbReference type="EMBL" id="AE017334">
    <property type="protein sequence ID" value="AAT33648.1"/>
    <property type="molecule type" value="Genomic_DNA"/>
</dbReference>
<dbReference type="EMBL" id="AE017225">
    <property type="protein sequence ID" value="AAT56501.1"/>
    <property type="molecule type" value="Genomic_DNA"/>
</dbReference>
<dbReference type="RefSeq" id="NP_846750.1">
    <property type="nucleotide sequence ID" value="NC_003997.3"/>
</dbReference>
<dbReference type="RefSeq" id="WP_000054692.1">
    <property type="nucleotide sequence ID" value="NZ_WXXJ01000027.1"/>
</dbReference>
<dbReference type="RefSeq" id="YP_030450.1">
    <property type="nucleotide sequence ID" value="NC_005945.1"/>
</dbReference>
<dbReference type="SMR" id="Q81LT4"/>
<dbReference type="STRING" id="261594.GBAA_4527"/>
<dbReference type="DNASU" id="1088255"/>
<dbReference type="GeneID" id="93006797"/>
<dbReference type="KEGG" id="ban:BA_4527"/>
<dbReference type="KEGG" id="bar:GBAA_4527"/>
<dbReference type="KEGG" id="bat:BAS4202"/>
<dbReference type="PATRIC" id="fig|198094.11.peg.4495"/>
<dbReference type="eggNOG" id="COG0319">
    <property type="taxonomic scope" value="Bacteria"/>
</dbReference>
<dbReference type="HOGENOM" id="CLU_106710_3_0_9"/>
<dbReference type="OMA" id="RMRIHPL"/>
<dbReference type="OrthoDB" id="9807740at2"/>
<dbReference type="Proteomes" id="UP000000427">
    <property type="component" value="Chromosome"/>
</dbReference>
<dbReference type="Proteomes" id="UP000000594">
    <property type="component" value="Chromosome"/>
</dbReference>
<dbReference type="GO" id="GO:0005737">
    <property type="term" value="C:cytoplasm"/>
    <property type="evidence" value="ECO:0007669"/>
    <property type="project" value="UniProtKB-SubCell"/>
</dbReference>
<dbReference type="GO" id="GO:0004222">
    <property type="term" value="F:metalloendopeptidase activity"/>
    <property type="evidence" value="ECO:0007669"/>
    <property type="project" value="InterPro"/>
</dbReference>
<dbReference type="GO" id="GO:0004521">
    <property type="term" value="F:RNA endonuclease activity"/>
    <property type="evidence" value="ECO:0007669"/>
    <property type="project" value="UniProtKB-UniRule"/>
</dbReference>
<dbReference type="GO" id="GO:0008270">
    <property type="term" value="F:zinc ion binding"/>
    <property type="evidence" value="ECO:0007669"/>
    <property type="project" value="UniProtKB-UniRule"/>
</dbReference>
<dbReference type="GO" id="GO:0006364">
    <property type="term" value="P:rRNA processing"/>
    <property type="evidence" value="ECO:0007669"/>
    <property type="project" value="UniProtKB-UniRule"/>
</dbReference>
<dbReference type="Gene3D" id="3.40.390.30">
    <property type="entry name" value="Metalloproteases ('zincins'), catalytic domain"/>
    <property type="match status" value="1"/>
</dbReference>
<dbReference type="HAMAP" id="MF_00009">
    <property type="entry name" value="Endoribonucl_YbeY"/>
    <property type="match status" value="1"/>
</dbReference>
<dbReference type="InterPro" id="IPR023091">
    <property type="entry name" value="MetalPrtase_cat_dom_sf_prd"/>
</dbReference>
<dbReference type="InterPro" id="IPR002036">
    <property type="entry name" value="YbeY"/>
</dbReference>
<dbReference type="InterPro" id="IPR020549">
    <property type="entry name" value="YbeY_CS"/>
</dbReference>
<dbReference type="NCBIfam" id="TIGR00043">
    <property type="entry name" value="rRNA maturation RNase YbeY"/>
    <property type="match status" value="1"/>
</dbReference>
<dbReference type="PANTHER" id="PTHR46986">
    <property type="entry name" value="ENDORIBONUCLEASE YBEY, CHLOROPLASTIC"/>
    <property type="match status" value="1"/>
</dbReference>
<dbReference type="PANTHER" id="PTHR46986:SF1">
    <property type="entry name" value="ENDORIBONUCLEASE YBEY, CHLOROPLASTIC"/>
    <property type="match status" value="1"/>
</dbReference>
<dbReference type="Pfam" id="PF02130">
    <property type="entry name" value="YbeY"/>
    <property type="match status" value="1"/>
</dbReference>
<dbReference type="SUPFAM" id="SSF55486">
    <property type="entry name" value="Metalloproteases ('zincins'), catalytic domain"/>
    <property type="match status" value="1"/>
</dbReference>
<dbReference type="PROSITE" id="PS01306">
    <property type="entry name" value="UPF0054"/>
    <property type="match status" value="1"/>
</dbReference>
<organism>
    <name type="scientific">Bacillus anthracis</name>
    <dbReference type="NCBI Taxonomy" id="1392"/>
    <lineage>
        <taxon>Bacteria</taxon>
        <taxon>Bacillati</taxon>
        <taxon>Bacillota</taxon>
        <taxon>Bacilli</taxon>
        <taxon>Bacillales</taxon>
        <taxon>Bacillaceae</taxon>
        <taxon>Bacillus</taxon>
        <taxon>Bacillus cereus group</taxon>
    </lineage>
</organism>
<accession>Q81LT4</accession>
<accession>Q6HT88</accession>
<accession>Q6KMH9</accession>
<evidence type="ECO:0000255" key="1">
    <source>
        <dbReference type="HAMAP-Rule" id="MF_00009"/>
    </source>
</evidence>
<comment type="function">
    <text evidence="1">Single strand-specific metallo-endoribonuclease involved in late-stage 70S ribosome quality control and in maturation of the 3' terminus of the 16S rRNA.</text>
</comment>
<comment type="cofactor">
    <cofactor evidence="1">
        <name>Zn(2+)</name>
        <dbReference type="ChEBI" id="CHEBI:29105"/>
    </cofactor>
    <text evidence="1">Binds 1 zinc ion.</text>
</comment>
<comment type="subcellular location">
    <subcellularLocation>
        <location evidence="1">Cytoplasm</location>
    </subcellularLocation>
</comment>
<comment type="similarity">
    <text evidence="1">Belongs to the endoribonuclease YbeY family.</text>
</comment>
<protein>
    <recommendedName>
        <fullName evidence="1">Endoribonuclease YbeY</fullName>
        <ecNumber evidence="1">3.1.-.-</ecNumber>
    </recommendedName>
</protein>
<keyword id="KW-0963">Cytoplasm</keyword>
<keyword id="KW-0255">Endonuclease</keyword>
<keyword id="KW-0378">Hydrolase</keyword>
<keyword id="KW-0479">Metal-binding</keyword>
<keyword id="KW-0540">Nuclease</keyword>
<keyword id="KW-1185">Reference proteome</keyword>
<keyword id="KW-0690">Ribosome biogenesis</keyword>
<keyword id="KW-0698">rRNA processing</keyword>
<keyword id="KW-0862">Zinc</keyword>
<gene>
    <name evidence="1" type="primary">ybeY</name>
    <name type="ordered locus">BA_4527</name>
    <name type="ordered locus">GBAA_4527</name>
    <name type="ordered locus">BAS4202</name>
</gene>
<sequence length="156" mass="18062">MSLLIDFIDETEEVKEEYVNLIREILGKAAQMEKIEDGAELSVTFVDNERIREINRDYRDKDQPTDVISFAMEEMGEGEMEIVGVEMPRMLGDLIISIPRAKEQAEEYGHSFDRELGFLALHGFLHLLGYDHMTEEDEKEMFGRQKEILEAFGLGR</sequence>
<proteinExistence type="inferred from homology"/>
<name>YBEY_BACAN</name>
<reference key="1">
    <citation type="journal article" date="2003" name="Nature">
        <title>The genome sequence of Bacillus anthracis Ames and comparison to closely related bacteria.</title>
        <authorList>
            <person name="Read T.D."/>
            <person name="Peterson S.N."/>
            <person name="Tourasse N.J."/>
            <person name="Baillie L.W."/>
            <person name="Paulsen I.T."/>
            <person name="Nelson K.E."/>
            <person name="Tettelin H."/>
            <person name="Fouts D.E."/>
            <person name="Eisen J.A."/>
            <person name="Gill S.R."/>
            <person name="Holtzapple E.K."/>
            <person name="Okstad O.A."/>
            <person name="Helgason E."/>
            <person name="Rilstone J."/>
            <person name="Wu M."/>
            <person name="Kolonay J.F."/>
            <person name="Beanan M.J."/>
            <person name="Dodson R.J."/>
            <person name="Brinkac L.M."/>
            <person name="Gwinn M.L."/>
            <person name="DeBoy R.T."/>
            <person name="Madpu R."/>
            <person name="Daugherty S.C."/>
            <person name="Durkin A.S."/>
            <person name="Haft D.H."/>
            <person name="Nelson W.C."/>
            <person name="Peterson J.D."/>
            <person name="Pop M."/>
            <person name="Khouri H.M."/>
            <person name="Radune D."/>
            <person name="Benton J.L."/>
            <person name="Mahamoud Y."/>
            <person name="Jiang L."/>
            <person name="Hance I.R."/>
            <person name="Weidman J.F."/>
            <person name="Berry K.J."/>
            <person name="Plaut R.D."/>
            <person name="Wolf A.M."/>
            <person name="Watkins K.L."/>
            <person name="Nierman W.C."/>
            <person name="Hazen A."/>
            <person name="Cline R.T."/>
            <person name="Redmond C."/>
            <person name="Thwaite J.E."/>
            <person name="White O."/>
            <person name="Salzberg S.L."/>
            <person name="Thomason B."/>
            <person name="Friedlander A.M."/>
            <person name="Koehler T.M."/>
            <person name="Hanna P.C."/>
            <person name="Kolstoe A.-B."/>
            <person name="Fraser C.M."/>
        </authorList>
    </citation>
    <scope>NUCLEOTIDE SEQUENCE [LARGE SCALE GENOMIC DNA]</scope>
    <source>
        <strain>Ames / isolate Porton</strain>
    </source>
</reference>
<reference key="2">
    <citation type="journal article" date="2009" name="J. Bacteriol.">
        <title>The complete genome sequence of Bacillus anthracis Ames 'Ancestor'.</title>
        <authorList>
            <person name="Ravel J."/>
            <person name="Jiang L."/>
            <person name="Stanley S.T."/>
            <person name="Wilson M.R."/>
            <person name="Decker R.S."/>
            <person name="Read T.D."/>
            <person name="Worsham P."/>
            <person name="Keim P.S."/>
            <person name="Salzberg S.L."/>
            <person name="Fraser-Liggett C.M."/>
            <person name="Rasko D.A."/>
        </authorList>
    </citation>
    <scope>NUCLEOTIDE SEQUENCE [LARGE SCALE GENOMIC DNA]</scope>
    <source>
        <strain>Ames ancestor</strain>
    </source>
</reference>
<reference key="3">
    <citation type="submission" date="2004-01" db="EMBL/GenBank/DDBJ databases">
        <title>Complete genome sequence of Bacillus anthracis Sterne.</title>
        <authorList>
            <person name="Brettin T.S."/>
            <person name="Bruce D."/>
            <person name="Challacombe J.F."/>
            <person name="Gilna P."/>
            <person name="Han C."/>
            <person name="Hill K."/>
            <person name="Hitchcock P."/>
            <person name="Jackson P."/>
            <person name="Keim P."/>
            <person name="Longmire J."/>
            <person name="Lucas S."/>
            <person name="Okinaka R."/>
            <person name="Richardson P."/>
            <person name="Rubin E."/>
            <person name="Tice H."/>
        </authorList>
    </citation>
    <scope>NUCLEOTIDE SEQUENCE [LARGE SCALE GENOMIC DNA]</scope>
    <source>
        <strain>Sterne</strain>
    </source>
</reference>
<feature type="chain" id="PRO_0000102402" description="Endoribonuclease YbeY">
    <location>
        <begin position="1"/>
        <end position="156"/>
    </location>
</feature>
<feature type="binding site" evidence="1">
    <location>
        <position position="122"/>
    </location>
    <ligand>
        <name>Zn(2+)</name>
        <dbReference type="ChEBI" id="CHEBI:29105"/>
        <note>catalytic</note>
    </ligand>
</feature>
<feature type="binding site" evidence="1">
    <location>
        <position position="126"/>
    </location>
    <ligand>
        <name>Zn(2+)</name>
        <dbReference type="ChEBI" id="CHEBI:29105"/>
        <note>catalytic</note>
    </ligand>
</feature>
<feature type="binding site" evidence="1">
    <location>
        <position position="132"/>
    </location>
    <ligand>
        <name>Zn(2+)</name>
        <dbReference type="ChEBI" id="CHEBI:29105"/>
        <note>catalytic</note>
    </ligand>
</feature>